<accession>F9USY3</accession>
<name>GLPF2_LACPL</name>
<gene>
    <name evidence="3" type="primary">glpF2</name>
    <name evidence="6" type="synonym">dhaP</name>
    <name evidence="6" type="ordered locus">lp_0171</name>
</gene>
<protein>
    <recommendedName>
        <fullName evidence="3">Glycerol uptake facilitator protein 2</fullName>
    </recommendedName>
</protein>
<feature type="chain" id="PRO_0000441643" description="Glycerol uptake facilitator protein 2">
    <location>
        <begin position="1"/>
        <end position="235"/>
    </location>
</feature>
<feature type="transmembrane region" description="Helical" evidence="1">
    <location>
        <begin position="4"/>
        <end position="24"/>
    </location>
</feature>
<feature type="transmembrane region" description="Helical" evidence="1">
    <location>
        <begin position="39"/>
        <end position="59"/>
    </location>
</feature>
<feature type="transmembrane region" description="Helical" evidence="1">
    <location>
        <begin position="62"/>
        <end position="82"/>
    </location>
</feature>
<feature type="transmembrane region" description="Helical" evidence="1">
    <location>
        <begin position="83"/>
        <end position="103"/>
    </location>
</feature>
<feature type="transmembrane region" description="Helical" evidence="1">
    <location>
        <begin position="134"/>
        <end position="154"/>
    </location>
</feature>
<feature type="transmembrane region" description="Helical" evidence="1">
    <location>
        <begin position="165"/>
        <end position="185"/>
    </location>
</feature>
<feature type="transmembrane region" description="Helical" evidence="1">
    <location>
        <begin position="210"/>
        <end position="230"/>
    </location>
</feature>
<feature type="short sequence motif" description="NPA 1" evidence="5">
    <location>
        <begin position="65"/>
        <end position="67"/>
    </location>
</feature>
<feature type="short sequence motif" description="NPA 2" evidence="5">
    <location>
        <begin position="186"/>
        <end position="188"/>
    </location>
</feature>
<comment type="function">
    <text evidence="2">Transporter that facilitates the transmembrane diffusion of water, dihydroxyacetone, glycerol and H(2)O(2). Is not permeable to urea and D/L-lactic acid.</text>
</comment>
<comment type="subcellular location">
    <subcellularLocation>
        <location evidence="2">Cell membrane</location>
        <topology evidence="1">Multi-pass membrane protein</topology>
    </subcellularLocation>
</comment>
<comment type="similarity">
    <text evidence="4">Belongs to the MIP/aquaporin (TC 1.A.8) family.</text>
</comment>
<proteinExistence type="inferred from homology"/>
<sequence length="235" mass="24998">MHGFLGEFLGTMVLIVFGVGSGAAMNLKGNYARHQNWTFICLAWGLAVTFGVYVAGQFGSDGHLNPAVTVGFALFGYLPMANVWPYLLGQFLGAFIGAVIVIIQYYPHFQAAKTAADGNQVGIFATGPAISNPVFNFLSETIATFFFIFVLLNLGNFTQGLKPLMVGLLIVVVGQTLGGTTGFAINPARDWAPRLAYTILPVPNKGLANWGYAWVPMFGPLLGGILAAGLETIIS</sequence>
<organism>
    <name type="scientific">Lactiplantibacillus plantarum (strain ATCC BAA-793 / NCIMB 8826 / WCFS1)</name>
    <name type="common">Lactobacillus plantarum</name>
    <dbReference type="NCBI Taxonomy" id="220668"/>
    <lineage>
        <taxon>Bacteria</taxon>
        <taxon>Bacillati</taxon>
        <taxon>Bacillota</taxon>
        <taxon>Bacilli</taxon>
        <taxon>Lactobacillales</taxon>
        <taxon>Lactobacillaceae</taxon>
        <taxon>Lactiplantibacillus</taxon>
    </lineage>
</organism>
<evidence type="ECO:0000255" key="1"/>
<evidence type="ECO:0000269" key="2">
    <source>
    </source>
</evidence>
<evidence type="ECO:0000303" key="3">
    <source>
    </source>
</evidence>
<evidence type="ECO:0000305" key="4"/>
<evidence type="ECO:0000305" key="5">
    <source>
    </source>
</evidence>
<evidence type="ECO:0000312" key="6">
    <source>
        <dbReference type="EMBL" id="CCC77714.1"/>
    </source>
</evidence>
<keyword id="KW-1003">Cell membrane</keyword>
<keyword id="KW-0472">Membrane</keyword>
<keyword id="KW-1185">Reference proteome</keyword>
<keyword id="KW-0812">Transmembrane</keyword>
<keyword id="KW-1133">Transmembrane helix</keyword>
<keyword id="KW-0813">Transport</keyword>
<reference key="1">
    <citation type="journal article" date="2003" name="Proc. Natl. Acad. Sci. U.S.A.">
        <title>Complete genome sequence of Lactobacillus plantarum WCFS1.</title>
        <authorList>
            <person name="Kleerebezem M."/>
            <person name="Boekhorst J."/>
            <person name="van Kranenburg R."/>
            <person name="Molenaar D."/>
            <person name="Kuipers O.P."/>
            <person name="Leer R."/>
            <person name="Tarchini R."/>
            <person name="Peters S.A."/>
            <person name="Sandbrink H.M."/>
            <person name="Fiers M.W.E.J."/>
            <person name="Stiekema W."/>
            <person name="Klein Lankhorst R.M."/>
            <person name="Bron P.A."/>
            <person name="Hoffer S.M."/>
            <person name="Nierop Groot M.N."/>
            <person name="Kerkhoven R."/>
            <person name="De Vries M."/>
            <person name="Ursing B."/>
            <person name="De Vos W.M."/>
            <person name="Siezen R.J."/>
        </authorList>
    </citation>
    <scope>NUCLEOTIDE SEQUENCE [LARGE SCALE GENOMIC DNA]</scope>
    <source>
        <strain>ATCC BAA-793 / NCIMB 8826 / WCFS1</strain>
    </source>
</reference>
<reference key="2">
    <citation type="journal article" date="2012" name="J. Bacteriol.">
        <title>Complete resequencing and reannotation of the Lactobacillus plantarum WCFS1 genome.</title>
        <authorList>
            <person name="Siezen R.J."/>
            <person name="Francke C."/>
            <person name="Renckens B."/>
            <person name="Boekhorst J."/>
            <person name="Wels M."/>
            <person name="Kleerebezem M."/>
            <person name="van Hijum S.A."/>
        </authorList>
    </citation>
    <scope>NUCLEOTIDE SEQUENCE [LARGE SCALE GENOMIC DNA]</scope>
    <scope>GENOME REANNOTATION</scope>
    <source>
        <strain>ATCC BAA-793 / NCIMB 8826 / WCFS1</strain>
    </source>
</reference>
<reference key="3">
    <citation type="journal article" date="2013" name="Biochem. J.">
        <title>Channel-mediated lactic acid transport: a novel function for aquaglyceroporins in bacteria.</title>
        <authorList>
            <person name="Bienert G.P."/>
            <person name="Desguin B."/>
            <person name="Chaumont F."/>
            <person name="Hols P."/>
        </authorList>
    </citation>
    <scope>FUNCTION</scope>
    <scope>SUBCELLULAR LOCATION</scope>
    <source>
        <strain>ATCC BAA-793 / NCIMB 8826 / WCFS1</strain>
    </source>
</reference>
<dbReference type="EMBL" id="AL935263">
    <property type="protein sequence ID" value="CCC77714.1"/>
    <property type="molecule type" value="Genomic_DNA"/>
</dbReference>
<dbReference type="RefSeq" id="WP_003641766.1">
    <property type="nucleotide sequence ID" value="NC_004567.2"/>
</dbReference>
<dbReference type="RefSeq" id="YP_004888228.1">
    <property type="nucleotide sequence ID" value="NC_004567.2"/>
</dbReference>
<dbReference type="SMR" id="F9USY3"/>
<dbReference type="STRING" id="220668.lp_0171"/>
<dbReference type="EnsemblBacteria" id="CCC77714">
    <property type="protein sequence ID" value="CCC77714"/>
    <property type="gene ID" value="lp_0171"/>
</dbReference>
<dbReference type="KEGG" id="lpl:lp_0171"/>
<dbReference type="PATRIC" id="fig|220668.9.peg.139"/>
<dbReference type="eggNOG" id="COG0580">
    <property type="taxonomic scope" value="Bacteria"/>
</dbReference>
<dbReference type="HOGENOM" id="CLU_020019_9_2_9"/>
<dbReference type="OrthoDB" id="9807293at2"/>
<dbReference type="PhylomeDB" id="F9USY3"/>
<dbReference type="Proteomes" id="UP000000432">
    <property type="component" value="Chromosome"/>
</dbReference>
<dbReference type="GO" id="GO:0005886">
    <property type="term" value="C:plasma membrane"/>
    <property type="evidence" value="ECO:0007669"/>
    <property type="project" value="UniProtKB-SubCell"/>
</dbReference>
<dbReference type="GO" id="GO:0015254">
    <property type="term" value="F:glycerol channel activity"/>
    <property type="evidence" value="ECO:0007669"/>
    <property type="project" value="TreeGrafter"/>
</dbReference>
<dbReference type="Gene3D" id="1.20.1080.10">
    <property type="entry name" value="Glycerol uptake facilitator protein"/>
    <property type="match status" value="1"/>
</dbReference>
<dbReference type="InterPro" id="IPR023271">
    <property type="entry name" value="Aquaporin-like"/>
</dbReference>
<dbReference type="InterPro" id="IPR000425">
    <property type="entry name" value="MIP"/>
</dbReference>
<dbReference type="InterPro" id="IPR050363">
    <property type="entry name" value="MIP/Aquaporin"/>
</dbReference>
<dbReference type="InterPro" id="IPR022357">
    <property type="entry name" value="MIP_CS"/>
</dbReference>
<dbReference type="PANTHER" id="PTHR43829">
    <property type="entry name" value="AQUAPORIN OR AQUAGLYCEROPORIN RELATED"/>
    <property type="match status" value="1"/>
</dbReference>
<dbReference type="PANTHER" id="PTHR43829:SF9">
    <property type="entry name" value="AQUAPORIN-9"/>
    <property type="match status" value="1"/>
</dbReference>
<dbReference type="Pfam" id="PF00230">
    <property type="entry name" value="MIP"/>
    <property type="match status" value="1"/>
</dbReference>
<dbReference type="PRINTS" id="PR00783">
    <property type="entry name" value="MINTRINSICP"/>
</dbReference>
<dbReference type="SUPFAM" id="SSF81338">
    <property type="entry name" value="Aquaporin-like"/>
    <property type="match status" value="1"/>
</dbReference>
<dbReference type="PROSITE" id="PS00221">
    <property type="entry name" value="MIP"/>
    <property type="match status" value="1"/>
</dbReference>